<protein>
    <recommendedName>
        <fullName evidence="1">UPF0114 protein PA14_60530</fullName>
    </recommendedName>
</protein>
<comment type="subcellular location">
    <subcellularLocation>
        <location evidence="1">Cell membrane</location>
        <topology evidence="1">Multi-pass membrane protein</topology>
    </subcellularLocation>
</comment>
<comment type="similarity">
    <text evidence="1">Belongs to the UPF0114 family.</text>
</comment>
<reference key="1">
    <citation type="journal article" date="2006" name="Genome Biol.">
        <title>Genomic analysis reveals that Pseudomonas aeruginosa virulence is combinatorial.</title>
        <authorList>
            <person name="Lee D.G."/>
            <person name="Urbach J.M."/>
            <person name="Wu G."/>
            <person name="Liberati N.T."/>
            <person name="Feinbaum R.L."/>
            <person name="Miyata S."/>
            <person name="Diggins L.T."/>
            <person name="He J."/>
            <person name="Saucier M."/>
            <person name="Deziel E."/>
            <person name="Friedman L."/>
            <person name="Li L."/>
            <person name="Grills G."/>
            <person name="Montgomery K."/>
            <person name="Kucherlapati R."/>
            <person name="Rahme L.G."/>
            <person name="Ausubel F.M."/>
        </authorList>
    </citation>
    <scope>NUCLEOTIDE SEQUENCE [LARGE SCALE GENOMIC DNA]</scope>
    <source>
        <strain>UCBPP-PA14</strain>
    </source>
</reference>
<accession>Q02GA3</accession>
<proteinExistence type="inferred from homology"/>
<name>Y6053_PSEAB</name>
<organism>
    <name type="scientific">Pseudomonas aeruginosa (strain UCBPP-PA14)</name>
    <dbReference type="NCBI Taxonomy" id="208963"/>
    <lineage>
        <taxon>Bacteria</taxon>
        <taxon>Pseudomonadati</taxon>
        <taxon>Pseudomonadota</taxon>
        <taxon>Gammaproteobacteria</taxon>
        <taxon>Pseudomonadales</taxon>
        <taxon>Pseudomonadaceae</taxon>
        <taxon>Pseudomonas</taxon>
    </lineage>
</organism>
<dbReference type="EMBL" id="CP000438">
    <property type="protein sequence ID" value="ABJ13952.1"/>
    <property type="molecule type" value="Genomic_DNA"/>
</dbReference>
<dbReference type="RefSeq" id="WP_003111135.1">
    <property type="nucleotide sequence ID" value="NZ_CP034244.1"/>
</dbReference>
<dbReference type="KEGG" id="pau:PA14_60530"/>
<dbReference type="PseudoCAP" id="PA14_60530"/>
<dbReference type="HOGENOM" id="CLU_097887_1_1_6"/>
<dbReference type="BioCyc" id="PAER208963:G1G74-5118-MONOMER"/>
<dbReference type="Proteomes" id="UP000000653">
    <property type="component" value="Chromosome"/>
</dbReference>
<dbReference type="GO" id="GO:0005886">
    <property type="term" value="C:plasma membrane"/>
    <property type="evidence" value="ECO:0007669"/>
    <property type="project" value="UniProtKB-SubCell"/>
</dbReference>
<dbReference type="HAMAP" id="MF_00143">
    <property type="entry name" value="UPF0114"/>
    <property type="match status" value="1"/>
</dbReference>
<dbReference type="InterPro" id="IPR005134">
    <property type="entry name" value="UPF0114"/>
</dbReference>
<dbReference type="InterPro" id="IPR020761">
    <property type="entry name" value="UPF0114_bac"/>
</dbReference>
<dbReference type="NCBIfam" id="TIGR00645">
    <property type="entry name" value="HI0507"/>
    <property type="match status" value="1"/>
</dbReference>
<dbReference type="PANTHER" id="PTHR38596">
    <property type="entry name" value="UPF0114 PROTEIN YQHA"/>
    <property type="match status" value="1"/>
</dbReference>
<dbReference type="PANTHER" id="PTHR38596:SF1">
    <property type="entry name" value="UPF0114 PROTEIN YQHA"/>
    <property type="match status" value="1"/>
</dbReference>
<dbReference type="Pfam" id="PF03350">
    <property type="entry name" value="UPF0114"/>
    <property type="match status" value="1"/>
</dbReference>
<feature type="chain" id="PRO_1000009484" description="UPF0114 protein PA14_60530">
    <location>
        <begin position="1"/>
        <end position="162"/>
    </location>
</feature>
<feature type="transmembrane region" description="Helical" evidence="1">
    <location>
        <begin position="15"/>
        <end position="35"/>
    </location>
</feature>
<feature type="transmembrane region" description="Helical" evidence="1">
    <location>
        <begin position="53"/>
        <end position="73"/>
    </location>
</feature>
<feature type="transmembrane region" description="Helical" evidence="1">
    <location>
        <begin position="136"/>
        <end position="156"/>
    </location>
</feature>
<evidence type="ECO:0000255" key="1">
    <source>
        <dbReference type="HAMAP-Rule" id="MF_00143"/>
    </source>
</evidence>
<keyword id="KW-1003">Cell membrane</keyword>
<keyword id="KW-0472">Membrane</keyword>
<keyword id="KW-0812">Transmembrane</keyword>
<keyword id="KW-1133">Transmembrane helix</keyword>
<sequence>MERFFENAMYASRWLLAPIYMGLSLALLALTIKFFQEIFHVIPNIFAMAEADLILVLLSLIDMALVGGLLVMVMISGYENFVSQLDIDEGKEKLNWLGKMDSGSLKNKVAASIVAISSIHLLRIFMDAKNVPDNKLMWYVIIHMTFVLSAFAMGYLDKQTRH</sequence>
<gene>
    <name type="ordered locus">PA14_60530</name>
</gene>